<feature type="chain" id="PRO_0000454853" description="D-2-hydroxyglutarate dehydrogenase">
    <location>
        <begin position="1"/>
        <end position="464"/>
    </location>
</feature>
<feature type="domain" description="FAD-binding PCMH-type" evidence="2">
    <location>
        <begin position="37"/>
        <end position="216"/>
    </location>
</feature>
<feature type="binding site" evidence="1">
    <location>
        <position position="325"/>
    </location>
    <ligand>
        <name>(R)-2-hydroxyglutarate</name>
        <dbReference type="ChEBI" id="CHEBI:15801"/>
    </ligand>
</feature>
<feature type="binding site" evidence="1">
    <location>
        <position position="325"/>
    </location>
    <ligand>
        <name>(R)-malate</name>
        <dbReference type="ChEBI" id="CHEBI:15588"/>
    </ligand>
</feature>
<feature type="binding site" evidence="1">
    <location>
        <position position="329"/>
    </location>
    <ligand>
        <name>(R)-2-hydroxyglutarate</name>
        <dbReference type="ChEBI" id="CHEBI:15801"/>
    </ligand>
</feature>
<feature type="binding site" evidence="1">
    <location>
        <position position="329"/>
    </location>
    <ligand>
        <name>(R)-malate</name>
        <dbReference type="ChEBI" id="CHEBI:15588"/>
    </ligand>
</feature>
<feature type="binding site" evidence="1">
    <location>
        <position position="339"/>
    </location>
    <ligand>
        <name>(R)-2-hydroxyglutarate</name>
        <dbReference type="ChEBI" id="CHEBI:15801"/>
    </ligand>
</feature>
<feature type="binding site" evidence="1">
    <location>
        <position position="339"/>
    </location>
    <ligand>
        <name>(R)-malate</name>
        <dbReference type="ChEBI" id="CHEBI:15588"/>
    </ligand>
</feature>
<feature type="binding site" evidence="1">
    <location>
        <position position="374"/>
    </location>
    <ligand>
        <name>Zn(2+)</name>
        <dbReference type="ChEBI" id="CHEBI:29105"/>
    </ligand>
</feature>
<feature type="binding site" evidence="1">
    <location>
        <position position="381"/>
    </location>
    <ligand>
        <name>Zn(2+)</name>
        <dbReference type="ChEBI" id="CHEBI:29105"/>
    </ligand>
</feature>
<feature type="binding site" evidence="1">
    <location>
        <position position="383"/>
    </location>
    <ligand>
        <name>(R)-2-hydroxyglutarate</name>
        <dbReference type="ChEBI" id="CHEBI:15801"/>
    </ligand>
</feature>
<feature type="binding site" evidence="1">
    <location>
        <position position="420"/>
    </location>
    <ligand>
        <name>Zn(2+)</name>
        <dbReference type="ChEBI" id="CHEBI:29105"/>
    </ligand>
</feature>
<feature type="binding site" evidence="1">
    <location>
        <position position="421"/>
    </location>
    <ligand>
        <name>(R)-2-hydroxyglutarate</name>
        <dbReference type="ChEBI" id="CHEBI:15801"/>
    </ligand>
</feature>
<feature type="binding site" evidence="1">
    <location>
        <position position="421"/>
    </location>
    <ligand>
        <name>(R)-malate</name>
        <dbReference type="ChEBI" id="CHEBI:15588"/>
    </ligand>
</feature>
<name>D2HDH_STUS1</name>
<keyword id="KW-0274">FAD</keyword>
<keyword id="KW-0285">Flavoprotein</keyword>
<keyword id="KW-0479">Metal-binding</keyword>
<keyword id="KW-0560">Oxidoreductase</keyword>
<keyword id="KW-1185">Reference proteome</keyword>
<keyword id="KW-0862">Zinc</keyword>
<evidence type="ECO:0000250" key="1">
    <source>
        <dbReference type="UniProtKB" id="Q8N465"/>
    </source>
</evidence>
<evidence type="ECO:0000255" key="2">
    <source>
        <dbReference type="PROSITE-ProRule" id="PRU00718"/>
    </source>
</evidence>
<evidence type="ECO:0000269" key="3">
    <source>
    </source>
</evidence>
<evidence type="ECO:0000269" key="4">
    <source>
    </source>
</evidence>
<evidence type="ECO:0000303" key="5">
    <source>
    </source>
</evidence>
<evidence type="ECO:0000303" key="6">
    <source>
    </source>
</evidence>
<evidence type="ECO:0000305" key="7"/>
<evidence type="ECO:0000305" key="8">
    <source>
    </source>
</evidence>
<evidence type="ECO:0000312" key="9">
    <source>
        <dbReference type="EMBL" id="ABP78105.1"/>
    </source>
</evidence>
<comment type="function">
    <text evidence="3 4">Catalyzes the dehydrogenation of (R)-2-hydroxyglutarate (D-2-hydroxyglutarate or D-2-HG) to 2-oxoglutarate and of (R)-malate (D-malate) to oxaloacetate. Is functionally tied to L-serine biosynthesis, via its coupling with the D-3-phosphoglycerate dehydrogenase SerA, encoded by the adjacent gene in the locus. Is required for the utilization of D-2-hydroxyglutarate as well as D-malate as the sole carbon source for growth of P.stutzeri. Active in vitro with artificial electron acceptors such as 2,6-dichlorophenolindophenol (DCPIP) and appears to couple with electron transfer flavoprotein (ETF) for efficient oxidation of both D-2-hydroxyglutarate and D-malate in vivo. Cannot catalyze the oxidation of L-2-hydroxyglutarate, D-lactate, D-tartrate, D-2-hydroxybutanoate, D-mandelate, D-glycerate and D-phenyllactate.</text>
</comment>
<comment type="catalytic activity">
    <reaction evidence="3 4">
        <text>(R)-2-hydroxyglutarate + A = 2-oxoglutarate + AH2</text>
        <dbReference type="Rhea" id="RHEA:38295"/>
        <dbReference type="ChEBI" id="CHEBI:13193"/>
        <dbReference type="ChEBI" id="CHEBI:15801"/>
        <dbReference type="ChEBI" id="CHEBI:16810"/>
        <dbReference type="ChEBI" id="CHEBI:17499"/>
        <dbReference type="EC" id="1.1.99.39"/>
    </reaction>
    <physiologicalReaction direction="left-to-right" evidence="3 4">
        <dbReference type="Rhea" id="RHEA:38296"/>
    </physiologicalReaction>
</comment>
<comment type="catalytic activity">
    <reaction evidence="3 4">
        <text>(R)-malate + A = oxaloacetate + AH2</text>
        <dbReference type="Rhea" id="RHEA:67460"/>
        <dbReference type="ChEBI" id="CHEBI:13193"/>
        <dbReference type="ChEBI" id="CHEBI:15588"/>
        <dbReference type="ChEBI" id="CHEBI:16452"/>
        <dbReference type="ChEBI" id="CHEBI:17499"/>
    </reaction>
    <physiologicalReaction direction="left-to-right" evidence="4">
        <dbReference type="Rhea" id="RHEA:67461"/>
    </physiologicalReaction>
</comment>
<comment type="cofactor">
    <cofactor evidence="3 4">
        <name>FAD</name>
        <dbReference type="ChEBI" id="CHEBI:57692"/>
    </cofactor>
    <text evidence="3">Binds 1 FAD per subunit.</text>
</comment>
<comment type="activity regulation">
    <text evidence="4">Activated by Zn(2+) ions at low concentrations (10 uM) and inhibited by Zn(2+), Fe(2+) and Ni(2+) at high concentrations (10 mM).</text>
</comment>
<comment type="biophysicochemical properties">
    <kinetics>
        <KM evidence="3">0.17 mM for D-2-hydroxyglutarate (at pH 7.4 and 37 degrees Celsius)</KM>
        <KM evidence="3">7.71 uM for electron transfer flavoprotein (at pH 7.4 and 37 degrees Celsius)</KM>
        <KM evidence="3">210 uM for cytochrome c (at pH 7.4 and 37 degrees Celsius)</KM>
        <KM evidence="4">3.61 mM for D-malate (at pH 7.4 and 30 degrees Celsius)</KM>
        <Vmax evidence="3">4.56 umol/min/mg enzyme with D-2-hydroxyglutarate as substrate and DCIP as the electron acceptor (at pH 7.4 and 37 degrees Celsius)</Vmax>
        <Vmax evidence="3">7.5 umol/min/mg enzyme with D-2-hydroxyglutarate as substrate and electron transfer flavoprotein (ETF) as the electron acceptor (at pH 7.4 and 37 degrees Celsius)</Vmax>
        <Vmax evidence="3">0.84 umol/min/mg enzyme with D-2-hydroxyglutarate as substrate and cytochrome c as the electron acceptor (at pH 7.4 and 37 degrees Celsius)</Vmax>
        <Vmax evidence="4">6.87 umol/min/mg enzyme with D-2-malate as substrate and DCIP as the electron acceptor (at pH 7.4 and 30 degrees Celsius)</Vmax>
        <text evidence="3 4">kcat is 7.9 sec(-1) with D-2-hydroxyglutarate as substrate and DCIP as the electron acceptor (at pH 7.4 and 37 degrees Celsius). kcat is 13.0 sec(-1) with D-2-hydroxyglutarate as substrate and electron transfer flavoprotein (ETF) as the electron acceptor (at pH 7.4 and 37 degrees Celsius). kcat is 1.45 sec(-1) with D-2-hydroxyglutarate as substrate and cytochrome c as the electron acceptor (at pH 7.4 and 37 degrees Celsius) (PubMed:28827360). kcat is 11.7 sec(-1) with D-malate as substrate and DCIP as the electron acceptor (at pH 7.4 and 30 degrees Celsius) (PubMed:30131334).</text>
    </kinetics>
</comment>
<comment type="subunit">
    <text evidence="3">Homodimer.</text>
</comment>
<comment type="induction">
    <text evidence="4">Expression is up-regulated by exogenously added D-2-hydroxyglutarate or D-malate.</text>
</comment>
<comment type="disruption phenotype">
    <text evidence="3 4">The deletion mutant is barely able to use D-2-HG for growth and displays a relatively slower growth in a medium containing glucose. Cells lacking this gene also show high accumulation of extracellular and intracellular D-2-HG (PubMed:28827360). Moreover, the mutant strain loses the ability to utilize D-malate for growth (PubMed:30131334).</text>
</comment>
<comment type="similarity">
    <text evidence="7">Belongs to the FAD-binding oxidoreductase/transferase type 4 family.</text>
</comment>
<proteinExistence type="evidence at protein level"/>
<dbReference type="EC" id="1.1.99.39" evidence="3 4"/>
<dbReference type="EC" id="1.1.99.-" evidence="3 4"/>
<dbReference type="EMBL" id="CP000304">
    <property type="protein sequence ID" value="ABP78105.1"/>
    <property type="molecule type" value="Genomic_DNA"/>
</dbReference>
<dbReference type="RefSeq" id="WP_011911635.1">
    <property type="nucleotide sequence ID" value="NC_009434.1"/>
</dbReference>
<dbReference type="KEGG" id="psa:PST_0399"/>
<dbReference type="eggNOG" id="COG0277">
    <property type="taxonomic scope" value="Bacteria"/>
</dbReference>
<dbReference type="HOGENOM" id="CLU_017779_4_1_6"/>
<dbReference type="Proteomes" id="UP000000233">
    <property type="component" value="Chromosome"/>
</dbReference>
<dbReference type="GO" id="GO:0071949">
    <property type="term" value="F:FAD binding"/>
    <property type="evidence" value="ECO:0007669"/>
    <property type="project" value="InterPro"/>
</dbReference>
<dbReference type="GO" id="GO:0046872">
    <property type="term" value="F:metal ion binding"/>
    <property type="evidence" value="ECO:0007669"/>
    <property type="project" value="UniProtKB-KW"/>
</dbReference>
<dbReference type="GO" id="GO:0016491">
    <property type="term" value="F:oxidoreductase activity"/>
    <property type="evidence" value="ECO:0007669"/>
    <property type="project" value="UniProtKB-KW"/>
</dbReference>
<dbReference type="GO" id="GO:0022904">
    <property type="term" value="P:respiratory electron transport chain"/>
    <property type="evidence" value="ECO:0007669"/>
    <property type="project" value="TreeGrafter"/>
</dbReference>
<dbReference type="FunFam" id="1.10.45.10:FF:000001">
    <property type="entry name" value="D-lactate dehydrogenase mitochondrial"/>
    <property type="match status" value="1"/>
</dbReference>
<dbReference type="FunFam" id="3.30.465.10:FF:000025">
    <property type="entry name" value="FAD-binding oxidoreductase"/>
    <property type="match status" value="1"/>
</dbReference>
<dbReference type="FunFam" id="3.30.70.2740:FF:000005">
    <property type="entry name" value="FAD-binding oxidoreductase"/>
    <property type="match status" value="1"/>
</dbReference>
<dbReference type="Gene3D" id="3.30.465.10">
    <property type="match status" value="1"/>
</dbReference>
<dbReference type="Gene3D" id="3.30.70.2190">
    <property type="match status" value="1"/>
</dbReference>
<dbReference type="Gene3D" id="3.30.70.2740">
    <property type="match status" value="1"/>
</dbReference>
<dbReference type="Gene3D" id="1.10.45.10">
    <property type="entry name" value="Vanillyl-alcohol Oxidase, Chain A, domain 4"/>
    <property type="match status" value="1"/>
</dbReference>
<dbReference type="InterPro" id="IPR004113">
    <property type="entry name" value="FAD-bd_oxidored_4_C"/>
</dbReference>
<dbReference type="InterPro" id="IPR016166">
    <property type="entry name" value="FAD-bd_PCMH"/>
</dbReference>
<dbReference type="InterPro" id="IPR036318">
    <property type="entry name" value="FAD-bd_PCMH-like_sf"/>
</dbReference>
<dbReference type="InterPro" id="IPR016169">
    <property type="entry name" value="FAD-bd_PCMH_sub2"/>
</dbReference>
<dbReference type="InterPro" id="IPR016164">
    <property type="entry name" value="FAD-linked_Oxase-like_C"/>
</dbReference>
<dbReference type="InterPro" id="IPR051264">
    <property type="entry name" value="FAD-oxidored/transferase_4"/>
</dbReference>
<dbReference type="InterPro" id="IPR006094">
    <property type="entry name" value="Oxid_FAD_bind_N"/>
</dbReference>
<dbReference type="InterPro" id="IPR016171">
    <property type="entry name" value="Vanillyl_alc_oxidase_C-sub2"/>
</dbReference>
<dbReference type="PANTHER" id="PTHR43716">
    <property type="entry name" value="D-2-HYDROXYGLUTARATE DEHYDROGENASE, MITOCHONDRIAL"/>
    <property type="match status" value="1"/>
</dbReference>
<dbReference type="PANTHER" id="PTHR43716:SF1">
    <property type="entry name" value="D-2-HYDROXYGLUTARATE DEHYDROGENASE, MITOCHONDRIAL"/>
    <property type="match status" value="1"/>
</dbReference>
<dbReference type="Pfam" id="PF02913">
    <property type="entry name" value="FAD-oxidase_C"/>
    <property type="match status" value="1"/>
</dbReference>
<dbReference type="Pfam" id="PF01565">
    <property type="entry name" value="FAD_binding_4"/>
    <property type="match status" value="1"/>
</dbReference>
<dbReference type="SUPFAM" id="SSF56176">
    <property type="entry name" value="FAD-binding/transporter-associated domain-like"/>
    <property type="match status" value="1"/>
</dbReference>
<dbReference type="SUPFAM" id="SSF55103">
    <property type="entry name" value="FAD-linked oxidases, C-terminal domain"/>
    <property type="match status" value="1"/>
</dbReference>
<dbReference type="PROSITE" id="PS51387">
    <property type="entry name" value="FAD_PCMH"/>
    <property type="match status" value="1"/>
</dbReference>
<protein>
    <recommendedName>
        <fullName evidence="5 6">D-2-hydroxyglutarate dehydrogenase</fullName>
        <shortName evidence="5 6">D-2-HG dehydrogenase</shortName>
        <shortName evidence="5 6">D2HGDH</shortName>
        <ecNumber evidence="3 4">1.1.99.39</ecNumber>
    </recommendedName>
    <alternativeName>
        <fullName evidence="8">D-malate dehydrogenase</fullName>
        <ecNumber evidence="3 4">1.1.99.-</ecNumber>
    </alternativeName>
</protein>
<accession>A4VGK4</accession>
<sequence>MTDPALIDELKTLVEPGKVLTDADSLNAYGKDWTKHFAPAPSAIVFPKSIEQVQAIVRWANAHKVALVPSGGRTGLSAAAVAANGEVVVSFDYMNQILEFNEMDRTAVCQPGVVTAQLQQFAEDKGLYYPVDFASAGSSQIGGNIGTNAGGIKVIRYGMTRNWVAGMKVVTGKGDLLELNKDLIKNATGYDLRQLFIGAEGTLGFVVEATMRLERQPTNLTALVLGTPDFDSIMPVLHAFQDKLDLTAFEFFSDKALAKVLGRGDVPAPFETDCPFYALLEFEATTEERAEQALATFEHCVEQGWVLDGVMSQSEQQLQNLWKLREYISETISHWTPYKNDISVTVGKVPAFLKEIDAIVGEHYPDFEIVWFGHIGDGNLHLNILKPDAMDKDEFFGKCATVNKWVFETVQKYNGSISAEHGVGMTKRDYLEYSRSPAEIEYMKAVKAVFDPNGIMNPGKIFAA</sequence>
<gene>
    <name evidence="5 6" type="primary">d2hgdh</name>
    <name evidence="9" type="ordered locus">PST_0399</name>
</gene>
<organism>
    <name type="scientific">Stutzerimonas stutzeri (strain A1501)</name>
    <name type="common">Pseudomonas stutzeri</name>
    <dbReference type="NCBI Taxonomy" id="379731"/>
    <lineage>
        <taxon>Bacteria</taxon>
        <taxon>Pseudomonadati</taxon>
        <taxon>Pseudomonadota</taxon>
        <taxon>Gammaproteobacteria</taxon>
        <taxon>Pseudomonadales</taxon>
        <taxon>Pseudomonadaceae</taxon>
        <taxon>Stutzerimonas</taxon>
    </lineage>
</organism>
<reference key="1">
    <citation type="journal article" date="2008" name="Proc. Natl. Acad. Sci. U.S.A.">
        <title>Nitrogen fixation island and rhizosphere competence traits in the genome of root-associated Pseudomonas stutzeri A1501.</title>
        <authorList>
            <person name="Yan Y."/>
            <person name="Yang J."/>
            <person name="Dou Y."/>
            <person name="Chen M."/>
            <person name="Ping S."/>
            <person name="Peng J."/>
            <person name="Lu W."/>
            <person name="Zhang W."/>
            <person name="Yao Z."/>
            <person name="Li H."/>
            <person name="Liu W."/>
            <person name="He S."/>
            <person name="Geng L."/>
            <person name="Zhang X."/>
            <person name="Yang F."/>
            <person name="Yu H."/>
            <person name="Zhan Y."/>
            <person name="Li D."/>
            <person name="Lin Z."/>
            <person name="Wang Y."/>
            <person name="Elmerich C."/>
            <person name="Lin M."/>
            <person name="Jin Q."/>
        </authorList>
    </citation>
    <scope>NUCLEOTIDE SEQUENCE [LARGE SCALE GENOMIC DNA]</scope>
    <source>
        <strain>A1501</strain>
    </source>
</reference>
<reference key="2">
    <citation type="journal article" date="2017" name="Proc. Natl. Acad. Sci. U.S.A.">
        <title>Coupling between D-3-phosphoglycerate dehydrogenase and S-2-hydroxyglutarate dehydrogenase drives bacterial L-serine synthesis.</title>
        <authorList>
            <person name="Zhang W."/>
            <person name="Zhang M."/>
            <person name="Gao C."/>
            <person name="Zhang Y."/>
            <person name="Ge Y."/>
            <person name="Guo S."/>
            <person name="Guo X."/>
            <person name="Zhou Z."/>
            <person name="Liu Q."/>
            <person name="Zhang Y."/>
            <person name="Ma C."/>
            <person name="Tao F."/>
            <person name="Xu P."/>
        </authorList>
    </citation>
    <scope>FUNCTION</scope>
    <scope>CATALYTIC ACTIVITY</scope>
    <scope>BIOPHYSICOCHEMICAL PROPERTIES</scope>
    <scope>SUBSTRATE SPECIFICITY</scope>
    <scope>COFACTOR</scope>
    <scope>DISRUPTION PHENOTYPE</scope>
    <scope>SUBUNIT</scope>
    <source>
        <strain>A1501</strain>
    </source>
</reference>
<reference key="3">
    <citation type="journal article" date="2018" name="J. Biol. Chem.">
        <title>D-2-Hydroxyglutarate dehydrogenase plays a dual role in L-serine biosynthesis and D-malate utilization in the bacterium Pseudomonas stutzeri.</title>
        <authorList>
            <person name="Guo X."/>
            <person name="Zhang M."/>
            <person name="Cao M."/>
            <person name="Zhang W."/>
            <person name="Kang Z."/>
            <person name="Xu P."/>
            <person name="Ma C."/>
            <person name="Gao C."/>
        </authorList>
    </citation>
    <scope>FUNCTION</scope>
    <scope>CATALYTIC ACTIVITY</scope>
    <scope>BIOPHYSICOCHEMICAL PROPERTIES</scope>
    <scope>SUBSTRATE SPECIFICITY</scope>
    <scope>COFACTOR</scope>
    <scope>DISRUPTION PHENOTYPE</scope>
    <scope>INDUCTION</scope>
    <scope>ACTIVITY REGULATION</scope>
    <source>
        <strain>A1501</strain>
    </source>
</reference>